<dbReference type="EMBL" id="Y15001">
    <property type="protein sequence ID" value="CAA75233.1"/>
    <property type="status" value="ALT_FRAME"/>
    <property type="molecule type" value="mRNA"/>
</dbReference>
<dbReference type="EMBL" id="AK143023">
    <property type="protein sequence ID" value="BAE25251.1"/>
    <property type="molecule type" value="mRNA"/>
</dbReference>
<dbReference type="EMBL" id="CH466525">
    <property type="protein sequence ID" value="EDL11081.1"/>
    <property type="molecule type" value="Genomic_DNA"/>
</dbReference>
<dbReference type="EMBL" id="BC085500">
    <property type="protein sequence ID" value="AAH85500.1"/>
    <property type="molecule type" value="mRNA"/>
</dbReference>
<dbReference type="CCDS" id="CCDS57630.1">
    <molecule id="P81067-2"/>
</dbReference>
<dbReference type="CCDS" id="CCDS57631.1">
    <molecule id="P81067-1"/>
</dbReference>
<dbReference type="RefSeq" id="NP_001240751.1">
    <molecule id="P81067-2"/>
    <property type="nucleotide sequence ID" value="NM_001253822.1"/>
</dbReference>
<dbReference type="RefSeq" id="NP_032419.2">
    <molecule id="P81067-1"/>
    <property type="nucleotide sequence ID" value="NM_008393.3"/>
</dbReference>
<dbReference type="SMR" id="P81067"/>
<dbReference type="FunCoup" id="P81067">
    <property type="interactions" value="419"/>
</dbReference>
<dbReference type="STRING" id="10090.ENSMUSP00000091002"/>
<dbReference type="iPTMnet" id="P81067"/>
<dbReference type="PhosphoSitePlus" id="P81067"/>
<dbReference type="PaxDb" id="10090-ENSMUSP00000091002"/>
<dbReference type="ProteomicsDB" id="301671">
    <molecule id="P81067-1"/>
</dbReference>
<dbReference type="ProteomicsDB" id="301672">
    <molecule id="P81067-2"/>
</dbReference>
<dbReference type="Antibodypedia" id="14619">
    <property type="antibodies" value="360 antibodies from 30 providers"/>
</dbReference>
<dbReference type="DNASU" id="16373"/>
<dbReference type="Ensembl" id="ENSMUST00000093312.6">
    <molecule id="P81067-2"/>
    <property type="protein sequence ID" value="ENSMUSP00000091002.4"/>
    <property type="gene ID" value="ENSMUSG00000031734.14"/>
</dbReference>
<dbReference type="Ensembl" id="ENSMUST00000175795.4">
    <molecule id="P81067-1"/>
    <property type="protein sequence ID" value="ENSMUSP00000135488.2"/>
    <property type="gene ID" value="ENSMUSG00000031734.14"/>
</dbReference>
<dbReference type="GeneID" id="16373"/>
<dbReference type="KEGG" id="mmu:16373"/>
<dbReference type="UCSC" id="uc009msu.2">
    <molecule id="P81067-1"/>
    <property type="organism name" value="mouse"/>
</dbReference>
<dbReference type="UCSC" id="uc009msv.2">
    <molecule id="P81067-2"/>
    <property type="organism name" value="mouse"/>
</dbReference>
<dbReference type="AGR" id="MGI:1197522"/>
<dbReference type="CTD" id="79191"/>
<dbReference type="MGI" id="MGI:1197522">
    <property type="gene designation" value="Irx3"/>
</dbReference>
<dbReference type="VEuPathDB" id="HostDB:ENSMUSG00000031734"/>
<dbReference type="eggNOG" id="KOG0773">
    <property type="taxonomic scope" value="Eukaryota"/>
</dbReference>
<dbReference type="GeneTree" id="ENSGT00940000161299"/>
<dbReference type="HOGENOM" id="CLU_042927_0_1_1"/>
<dbReference type="InParanoid" id="P81067"/>
<dbReference type="OMA" id="NQKPKIW"/>
<dbReference type="OrthoDB" id="92019at9989"/>
<dbReference type="PhylomeDB" id="P81067"/>
<dbReference type="TreeFam" id="TF319371"/>
<dbReference type="BioGRID-ORCS" id="16373">
    <property type="hits" value="3 hits in 80 CRISPR screens"/>
</dbReference>
<dbReference type="PRO" id="PR:P81067"/>
<dbReference type="Proteomes" id="UP000000589">
    <property type="component" value="Chromosome 8"/>
</dbReference>
<dbReference type="RNAct" id="P81067">
    <property type="molecule type" value="protein"/>
</dbReference>
<dbReference type="Bgee" id="ENSMUSG00000031734">
    <property type="expression patterns" value="Expressed in epithelium of cochlear duct and 239 other cell types or tissues"/>
</dbReference>
<dbReference type="GO" id="GO:0030424">
    <property type="term" value="C:axon"/>
    <property type="evidence" value="ECO:0000314"/>
    <property type="project" value="MGI"/>
</dbReference>
<dbReference type="GO" id="GO:0005737">
    <property type="term" value="C:cytoplasm"/>
    <property type="evidence" value="ECO:0000314"/>
    <property type="project" value="MGI"/>
</dbReference>
<dbReference type="GO" id="GO:0005634">
    <property type="term" value="C:nucleus"/>
    <property type="evidence" value="ECO:0000314"/>
    <property type="project" value="MGI"/>
</dbReference>
<dbReference type="GO" id="GO:0001228">
    <property type="term" value="F:DNA-binding transcription activator activity, RNA polymerase II-specific"/>
    <property type="evidence" value="ECO:0000314"/>
    <property type="project" value="BHF-UCL"/>
</dbReference>
<dbReference type="GO" id="GO:0001227">
    <property type="term" value="F:DNA-binding transcription repressor activity, RNA polymerase II-specific"/>
    <property type="evidence" value="ECO:0000314"/>
    <property type="project" value="BHF-UCL"/>
</dbReference>
<dbReference type="GO" id="GO:0000978">
    <property type="term" value="F:RNA polymerase II cis-regulatory region sequence-specific DNA binding"/>
    <property type="evidence" value="ECO:0000314"/>
    <property type="project" value="BHF-UCL"/>
</dbReference>
<dbReference type="GO" id="GO:0003167">
    <property type="term" value="P:atrioventricular bundle cell differentiation"/>
    <property type="evidence" value="ECO:0000315"/>
    <property type="project" value="BHF-UCL"/>
</dbReference>
<dbReference type="GO" id="GO:0097009">
    <property type="term" value="P:energy homeostasis"/>
    <property type="evidence" value="ECO:0000314"/>
    <property type="project" value="UniProtKB"/>
</dbReference>
<dbReference type="GO" id="GO:0060932">
    <property type="term" value="P:His-Purkinje system cell differentiation"/>
    <property type="evidence" value="ECO:0000315"/>
    <property type="project" value="BHF-UCL"/>
</dbReference>
<dbReference type="GO" id="GO:0001822">
    <property type="term" value="P:kidney development"/>
    <property type="evidence" value="ECO:0000266"/>
    <property type="project" value="MGI"/>
</dbReference>
<dbReference type="GO" id="GO:0007498">
    <property type="term" value="P:mesoderm development"/>
    <property type="evidence" value="ECO:0000316"/>
    <property type="project" value="MGI"/>
</dbReference>
<dbReference type="GO" id="GO:0001656">
    <property type="term" value="P:metanephros development"/>
    <property type="evidence" value="ECO:0000270"/>
    <property type="project" value="UniProtKB"/>
</dbReference>
<dbReference type="GO" id="GO:0045665">
    <property type="term" value="P:negative regulation of neuron differentiation"/>
    <property type="evidence" value="ECO:0000314"/>
    <property type="project" value="MGI"/>
</dbReference>
<dbReference type="GO" id="GO:0000122">
    <property type="term" value="P:negative regulation of transcription by RNA polymerase II"/>
    <property type="evidence" value="ECO:0000314"/>
    <property type="project" value="BHF-UCL"/>
</dbReference>
<dbReference type="GO" id="GO:0030182">
    <property type="term" value="P:neuron differentiation"/>
    <property type="evidence" value="ECO:0000314"/>
    <property type="project" value="MGI"/>
</dbReference>
<dbReference type="GO" id="GO:1903598">
    <property type="term" value="P:positive regulation of gap junction assembly"/>
    <property type="evidence" value="ECO:0000315"/>
    <property type="project" value="BHF-UCL"/>
</dbReference>
<dbReference type="GO" id="GO:0045666">
    <property type="term" value="P:positive regulation of neuron differentiation"/>
    <property type="evidence" value="ECO:0000314"/>
    <property type="project" value="MGI"/>
</dbReference>
<dbReference type="GO" id="GO:0045944">
    <property type="term" value="P:positive regulation of transcription by RNA polymerase II"/>
    <property type="evidence" value="ECO:0000314"/>
    <property type="project" value="BHF-UCL"/>
</dbReference>
<dbReference type="GO" id="GO:0072047">
    <property type="term" value="P:proximal/distal pattern formation involved in nephron development"/>
    <property type="evidence" value="ECO:0000270"/>
    <property type="project" value="UniProtKB"/>
</dbReference>
<dbReference type="GO" id="GO:0003165">
    <property type="term" value="P:Purkinje myocyte development"/>
    <property type="evidence" value="ECO:0000315"/>
    <property type="project" value="BHF-UCL"/>
</dbReference>
<dbReference type="GO" id="GO:1901844">
    <property type="term" value="P:regulation of cell communication by electrical coupling involved in cardiac conduction"/>
    <property type="evidence" value="ECO:0000315"/>
    <property type="project" value="BHF-UCL"/>
</dbReference>
<dbReference type="GO" id="GO:0072086">
    <property type="term" value="P:specification of loop of Henle identity"/>
    <property type="evidence" value="ECO:0000270"/>
    <property type="project" value="UniProtKB"/>
</dbReference>
<dbReference type="CDD" id="cd00086">
    <property type="entry name" value="homeodomain"/>
    <property type="match status" value="1"/>
</dbReference>
<dbReference type="FunFam" id="1.10.10.60:FF:000003">
    <property type="entry name" value="Iroquois-class homeobox protein IRX"/>
    <property type="match status" value="1"/>
</dbReference>
<dbReference type="Gene3D" id="1.10.10.60">
    <property type="entry name" value="Homeodomain-like"/>
    <property type="match status" value="1"/>
</dbReference>
<dbReference type="InterPro" id="IPR001356">
    <property type="entry name" value="HD"/>
</dbReference>
<dbReference type="InterPro" id="IPR017970">
    <property type="entry name" value="Homeobox_CS"/>
</dbReference>
<dbReference type="InterPro" id="IPR009057">
    <property type="entry name" value="Homeodomain-like_sf"/>
</dbReference>
<dbReference type="InterPro" id="IPR003893">
    <property type="entry name" value="Iroquois_homeo"/>
</dbReference>
<dbReference type="InterPro" id="IPR008422">
    <property type="entry name" value="KN_HD"/>
</dbReference>
<dbReference type="PANTHER" id="PTHR11211">
    <property type="entry name" value="IROQUOIS-CLASS HOMEODOMAIN PROTEIN IRX"/>
    <property type="match status" value="1"/>
</dbReference>
<dbReference type="PANTHER" id="PTHR11211:SF14">
    <property type="entry name" value="IROQUOIS-CLASS HOMEODOMAIN PROTEIN IRX-3"/>
    <property type="match status" value="1"/>
</dbReference>
<dbReference type="Pfam" id="PF05920">
    <property type="entry name" value="Homeobox_KN"/>
    <property type="match status" value="1"/>
</dbReference>
<dbReference type="SMART" id="SM00389">
    <property type="entry name" value="HOX"/>
    <property type="match status" value="1"/>
</dbReference>
<dbReference type="SMART" id="SM00548">
    <property type="entry name" value="IRO"/>
    <property type="match status" value="1"/>
</dbReference>
<dbReference type="SUPFAM" id="SSF46689">
    <property type="entry name" value="Homeodomain-like"/>
    <property type="match status" value="1"/>
</dbReference>
<dbReference type="PROSITE" id="PS00027">
    <property type="entry name" value="HOMEOBOX_1"/>
    <property type="match status" value="1"/>
</dbReference>
<dbReference type="PROSITE" id="PS50071">
    <property type="entry name" value="HOMEOBOX_2"/>
    <property type="match status" value="1"/>
</dbReference>
<accession>P81067</accession>
<accession>Q3UPZ3</accession>
<accession>Q5U3K8</accession>
<sequence length="507" mass="52693">MSFPQLGYQYIRPLYPPERPGAAGGGGGGSSAGGRSGPGAGASELAASGSLSNVLSSVYGAPYAAAAAAAAAAQGYGAFLPYATELPIFPQLGAQYELKDSPGVQHPATAAAFPHPHPAFYPYGQYQFGDPSRPKNATRESTSTLKAWLNEHRKNPYPTKGEKIMLAIITKMTLTQVSTWFANARRRLKKENKMTWAPRSRTDEEGNAYGSEREEEDEEEDEEESKRELEMEEEELAGEEEDTGGEGLADDDEDEEIDLENLDSAAAGSELTLAGAAHRNGDFGLGPISDCKTSDSDDSSEGLEDRPLSVLSLAPPPPPVARAPASPPSPPSSLDPCAPAPAPSSALQKPKIWSLAETATSPDNPRRSPPGAGGSPPGAAVAPPTLQLSPAAAAAAAAAHRLVSAPLGKFPAWTNRPFPGPPAGPRPHPLSMLGSAPQHLLGLPGAAGHPAAAAAAYARPAEPESGTDRCSALEVEKKLLKTAFQPVPRRPQNHLDAALVLSALSSS</sequence>
<feature type="chain" id="PRO_0000049156" description="Iroquois-class homeodomain protein IRX-3">
    <location>
        <begin position="1"/>
        <end position="507"/>
    </location>
</feature>
<feature type="DNA-binding region" description="Homeobox; TALE-type" evidence="1">
    <location>
        <begin position="130"/>
        <end position="192"/>
    </location>
</feature>
<feature type="region of interest" description="Disordered" evidence="2">
    <location>
        <begin position="19"/>
        <end position="39"/>
    </location>
</feature>
<feature type="region of interest" description="Disordered" evidence="2">
    <location>
        <begin position="193"/>
        <end position="398"/>
    </location>
</feature>
<feature type="region of interest" description="Disordered" evidence="2">
    <location>
        <begin position="416"/>
        <end position="468"/>
    </location>
</feature>
<feature type="compositionally biased region" description="Gly residues" evidence="2">
    <location>
        <begin position="22"/>
        <end position="39"/>
    </location>
</feature>
<feature type="compositionally biased region" description="Acidic residues" evidence="2">
    <location>
        <begin position="213"/>
        <end position="223"/>
    </location>
</feature>
<feature type="compositionally biased region" description="Acidic residues" evidence="2">
    <location>
        <begin position="230"/>
        <end position="261"/>
    </location>
</feature>
<feature type="compositionally biased region" description="Pro residues" evidence="2">
    <location>
        <begin position="314"/>
        <end position="342"/>
    </location>
</feature>
<feature type="compositionally biased region" description="Pro residues" evidence="2">
    <location>
        <begin position="418"/>
        <end position="428"/>
    </location>
</feature>
<feature type="compositionally biased region" description="Low complexity" evidence="2">
    <location>
        <begin position="436"/>
        <end position="460"/>
    </location>
</feature>
<feature type="modified residue" description="Phosphoserine" evidence="13">
    <location>
        <position position="326"/>
    </location>
</feature>
<feature type="modified residue" description="Phosphoserine" evidence="13">
    <location>
        <position position="329"/>
    </location>
</feature>
<feature type="splice variant" id="VSP_038351" description="In isoform 2." evidence="11">
    <original>DRCSALEVEKKLLKTAFQPVPRRPQNHLDAALVLSALSSS</original>
    <variation>GDKKNIAVVPWKWRKSYSRQLSSRCQGGHRTIWTLLWSYQLSPRLNFSTIFKSLY</variation>
    <location>
        <begin position="468"/>
        <end position="507"/>
    </location>
</feature>
<feature type="sequence conflict" description="In Ref. 1; CAA75233." evidence="12" ref="1">
    <original>H</original>
    <variation>R</variation>
    <location>
        <position position="494"/>
    </location>
</feature>
<evidence type="ECO:0000255" key="1">
    <source>
        <dbReference type="PROSITE-ProRule" id="PRU00108"/>
    </source>
</evidence>
<evidence type="ECO:0000256" key="2">
    <source>
        <dbReference type="SAM" id="MobiDB-lite"/>
    </source>
</evidence>
<evidence type="ECO:0000269" key="3">
    <source>
    </source>
</evidence>
<evidence type="ECO:0000269" key="4">
    <source>
    </source>
</evidence>
<evidence type="ECO:0000269" key="5">
    <source>
    </source>
</evidence>
<evidence type="ECO:0000269" key="6">
    <source>
    </source>
</evidence>
<evidence type="ECO:0000269" key="7">
    <source>
    </source>
</evidence>
<evidence type="ECO:0000269" key="8">
    <source>
    </source>
</evidence>
<evidence type="ECO:0000269" key="9">
    <source>
    </source>
</evidence>
<evidence type="ECO:0000269" key="10">
    <source>
    </source>
</evidence>
<evidence type="ECO:0000303" key="11">
    <source>
    </source>
</evidence>
<evidence type="ECO:0000305" key="12"/>
<evidence type="ECO:0007744" key="13">
    <source>
    </source>
</evidence>
<keyword id="KW-0025">Alternative splicing</keyword>
<keyword id="KW-0217">Developmental protein</keyword>
<keyword id="KW-0238">DNA-binding</keyword>
<keyword id="KW-0371">Homeobox</keyword>
<keyword id="KW-0539">Nucleus</keyword>
<keyword id="KW-0597">Phosphoprotein</keyword>
<keyword id="KW-1185">Reference proteome</keyword>
<keyword id="KW-0678">Repressor</keyword>
<keyword id="KW-0804">Transcription</keyword>
<keyword id="KW-0805">Transcription regulation</keyword>
<name>IRX3_MOUSE</name>
<gene>
    <name type="primary">Irx3</name>
    <name type="synonym">Irxb1</name>
</gene>
<organism>
    <name type="scientific">Mus musculus</name>
    <name type="common">Mouse</name>
    <dbReference type="NCBI Taxonomy" id="10090"/>
    <lineage>
        <taxon>Eukaryota</taxon>
        <taxon>Metazoa</taxon>
        <taxon>Chordata</taxon>
        <taxon>Craniata</taxon>
        <taxon>Vertebrata</taxon>
        <taxon>Euteleostomi</taxon>
        <taxon>Mammalia</taxon>
        <taxon>Eutheria</taxon>
        <taxon>Euarchontoglires</taxon>
        <taxon>Glires</taxon>
        <taxon>Rodentia</taxon>
        <taxon>Myomorpha</taxon>
        <taxon>Muroidea</taxon>
        <taxon>Muridae</taxon>
        <taxon>Murinae</taxon>
        <taxon>Mus</taxon>
        <taxon>Mus</taxon>
    </lineage>
</organism>
<proteinExistence type="evidence at protein level"/>
<comment type="function">
    <text evidence="4 6 8">Transcription factor involved in SHH-dependent neural patterning (PubMed:10830170, PubMed:15201216). Together with NKX2-2 and NKX6-1 acts to restrict the generation of motor neurons to the appropriate region of the neural tube (PubMed:10830170, PubMed:15201216). Belongs to the class I proteins of neuronal progenitor factors, which are repressed by SHH signals (PubMed:10830170, PubMed:15201216). Involved in the transcriptional repression of MNX1 in non-motor neuron cells (PubMed:15201216). Acts as a regulator of energy metabolism (PubMed:24646999).</text>
</comment>
<comment type="subcellular location">
    <subcellularLocation>
        <location evidence="12">Nucleus</location>
    </subcellularLocation>
</comment>
<comment type="alternative products">
    <event type="alternative splicing"/>
    <isoform>
        <id>P81067-1</id>
        <name>1</name>
        <sequence type="displayed"/>
    </isoform>
    <isoform>
        <id>P81067-2</id>
        <name>2</name>
        <sequence type="described" ref="VSP_038351"/>
    </isoform>
</comment>
<comment type="tissue specificity">
    <text evidence="4 7">Expressed by neural progenitor cells in discrete domains of the ventral neural tube. Also expressed in specific and overlapping patterns with Irx1 and Irx2 in the developing and adult metanephric kidney. In the adult metanephros, renal expression is confined to the S3 segment of the proximal tubule, in the loop of Henle.</text>
</comment>
<comment type="developmental stage">
    <text evidence="3 5 9 10">The earliest expressed of the Irx family, with expression seen in trophectoderm-derived extraembryonic tissues from 6.5 dpc, including expression in the chorionic ectoderm at 8.0 dpc. Embryonic expression starts at the end of gastrulation (7.5 dpc) in the ectodermal layer which gives rise to the nervous system. At 8.0 dpc, expression is confined to the thickening neural ectoderm corresponding to the future mesencephalon (midbrain) and rhombencephalon (hindbrain) and from 8.5 dpc onwards, expression also includes the rostral part of the closing neural tube. After neural tube closure at 9.5 dpc, expression predominates in the CNS in the midbrain, hindbrain and spinal cord. Also expressed in a number of tissues outside of the CNS including ectodermal layer of the branchial arches. Expressed in the prospective limb buds of the lateral plate mesoderm, and from 10.5 dpc onwards a gradient exists along the dorsoventral and proximodistal axes of developing limbs. Expressed in the notochord at stage 9.0 dpc. At 9.5 dpc found in the cephalic mesoderm surrounding the optic vesicle. Around 10.5 dpc, expression in the head mesoderm extends into the nasal pits. By 12.5 dpc, still expressed in the mesenchyme, and expressions begins in specific subsets of post-mitotic cells in the neuroretina. As development ensues, expression increases in the neuroretina and mesenchymal expression gradually decreases. At 16.5 dpc, expressed exclusively in the inner neuroblast layers of the neuroretina. In the developing heart, first expressed in the trabecules of embryonic ventricles at 9.5 dpc, and from then onwards localizes specifically to the trabeculated myocardium of the ventricles.</text>
</comment>
<comment type="disruption phenotype">
    <text evidence="8">Mice are viable and fertile but display a significant reduction of body weight, primarily through the loss of fat mass and increase in basal metabolic rate with browning of white adipose tissue.</text>
</comment>
<comment type="similarity">
    <text evidence="12">Belongs to the TALE/IRO homeobox family.</text>
</comment>
<comment type="sequence caution" evidence="12">
    <conflict type="frameshift">
        <sequence resource="EMBL-CDS" id="CAA75233"/>
    </conflict>
</comment>
<protein>
    <recommendedName>
        <fullName>Iroquois-class homeodomain protein IRX-3</fullName>
    </recommendedName>
    <alternativeName>
        <fullName>Homeodomain protein IRXB1</fullName>
    </alternativeName>
    <alternativeName>
        <fullName>Iroquois homeobox protein 3</fullName>
    </alternativeName>
</protein>
<reference key="1">
    <citation type="journal article" date="1997" name="Mech. Dev.">
        <title>Identification of the vertebrate Iroquois homeobox gene family with overlapping expression during early development of the nervous system.</title>
        <authorList>
            <person name="Bosse A."/>
            <person name="Zulch A."/>
            <person name="Becker M.B."/>
            <person name="Torres M."/>
            <person name="Gomez-Skarmeta J.-L."/>
            <person name="Modolell J."/>
            <person name="Gruss P."/>
        </authorList>
    </citation>
    <scope>NUCLEOTIDE SEQUENCE [MRNA] (ISOFORM 1)</scope>
    <scope>DEVELOPMENTAL STAGE</scope>
</reference>
<reference key="2">
    <citation type="journal article" date="2000" name="Dev. Biol.">
        <title>Patterning the embryonic heart: identification of five mouse Iroquois homeobox genes in the developing heart.</title>
        <authorList>
            <person name="Christoffels V.M."/>
            <person name="Keijser A.G.M."/>
            <person name="Houweling A.C."/>
            <person name="Clout D.E.W."/>
            <person name="Moorman A.F.M."/>
        </authorList>
    </citation>
    <scope>NUCLEOTIDE SEQUENCE [MRNA] (ISOFORM 1)</scope>
    <scope>DEVELOPMENTAL STAGE</scope>
    <source>
        <strain>FVB/N</strain>
        <tissue>Embryonic heart</tissue>
    </source>
</reference>
<reference key="3">
    <citation type="journal article" date="2005" name="Science">
        <title>The transcriptional landscape of the mammalian genome.</title>
        <authorList>
            <person name="Carninci P."/>
            <person name="Kasukawa T."/>
            <person name="Katayama S."/>
            <person name="Gough J."/>
            <person name="Frith M.C."/>
            <person name="Maeda N."/>
            <person name="Oyama R."/>
            <person name="Ravasi T."/>
            <person name="Lenhard B."/>
            <person name="Wells C."/>
            <person name="Kodzius R."/>
            <person name="Shimokawa K."/>
            <person name="Bajic V.B."/>
            <person name="Brenner S.E."/>
            <person name="Batalov S."/>
            <person name="Forrest A.R."/>
            <person name="Zavolan M."/>
            <person name="Davis M.J."/>
            <person name="Wilming L.G."/>
            <person name="Aidinis V."/>
            <person name="Allen J.E."/>
            <person name="Ambesi-Impiombato A."/>
            <person name="Apweiler R."/>
            <person name="Aturaliya R.N."/>
            <person name="Bailey T.L."/>
            <person name="Bansal M."/>
            <person name="Baxter L."/>
            <person name="Beisel K.W."/>
            <person name="Bersano T."/>
            <person name="Bono H."/>
            <person name="Chalk A.M."/>
            <person name="Chiu K.P."/>
            <person name="Choudhary V."/>
            <person name="Christoffels A."/>
            <person name="Clutterbuck D.R."/>
            <person name="Crowe M.L."/>
            <person name="Dalla E."/>
            <person name="Dalrymple B.P."/>
            <person name="de Bono B."/>
            <person name="Della Gatta G."/>
            <person name="di Bernardo D."/>
            <person name="Down T."/>
            <person name="Engstrom P."/>
            <person name="Fagiolini M."/>
            <person name="Faulkner G."/>
            <person name="Fletcher C.F."/>
            <person name="Fukushima T."/>
            <person name="Furuno M."/>
            <person name="Futaki S."/>
            <person name="Gariboldi M."/>
            <person name="Georgii-Hemming P."/>
            <person name="Gingeras T.R."/>
            <person name="Gojobori T."/>
            <person name="Green R.E."/>
            <person name="Gustincich S."/>
            <person name="Harbers M."/>
            <person name="Hayashi Y."/>
            <person name="Hensch T.K."/>
            <person name="Hirokawa N."/>
            <person name="Hill D."/>
            <person name="Huminiecki L."/>
            <person name="Iacono M."/>
            <person name="Ikeo K."/>
            <person name="Iwama A."/>
            <person name="Ishikawa T."/>
            <person name="Jakt M."/>
            <person name="Kanapin A."/>
            <person name="Katoh M."/>
            <person name="Kawasawa Y."/>
            <person name="Kelso J."/>
            <person name="Kitamura H."/>
            <person name="Kitano H."/>
            <person name="Kollias G."/>
            <person name="Krishnan S.P."/>
            <person name="Kruger A."/>
            <person name="Kummerfeld S.K."/>
            <person name="Kurochkin I.V."/>
            <person name="Lareau L.F."/>
            <person name="Lazarevic D."/>
            <person name="Lipovich L."/>
            <person name="Liu J."/>
            <person name="Liuni S."/>
            <person name="McWilliam S."/>
            <person name="Madan Babu M."/>
            <person name="Madera M."/>
            <person name="Marchionni L."/>
            <person name="Matsuda H."/>
            <person name="Matsuzawa S."/>
            <person name="Miki H."/>
            <person name="Mignone F."/>
            <person name="Miyake S."/>
            <person name="Morris K."/>
            <person name="Mottagui-Tabar S."/>
            <person name="Mulder N."/>
            <person name="Nakano N."/>
            <person name="Nakauchi H."/>
            <person name="Ng P."/>
            <person name="Nilsson R."/>
            <person name="Nishiguchi S."/>
            <person name="Nishikawa S."/>
            <person name="Nori F."/>
            <person name="Ohara O."/>
            <person name="Okazaki Y."/>
            <person name="Orlando V."/>
            <person name="Pang K.C."/>
            <person name="Pavan W.J."/>
            <person name="Pavesi G."/>
            <person name="Pesole G."/>
            <person name="Petrovsky N."/>
            <person name="Piazza S."/>
            <person name="Reed J."/>
            <person name="Reid J.F."/>
            <person name="Ring B.Z."/>
            <person name="Ringwald M."/>
            <person name="Rost B."/>
            <person name="Ruan Y."/>
            <person name="Salzberg S.L."/>
            <person name="Sandelin A."/>
            <person name="Schneider C."/>
            <person name="Schoenbach C."/>
            <person name="Sekiguchi K."/>
            <person name="Semple C.A."/>
            <person name="Seno S."/>
            <person name="Sessa L."/>
            <person name="Sheng Y."/>
            <person name="Shibata Y."/>
            <person name="Shimada H."/>
            <person name="Shimada K."/>
            <person name="Silva D."/>
            <person name="Sinclair B."/>
            <person name="Sperling S."/>
            <person name="Stupka E."/>
            <person name="Sugiura K."/>
            <person name="Sultana R."/>
            <person name="Takenaka Y."/>
            <person name="Taki K."/>
            <person name="Tammoja K."/>
            <person name="Tan S.L."/>
            <person name="Tang S."/>
            <person name="Taylor M.S."/>
            <person name="Tegner J."/>
            <person name="Teichmann S.A."/>
            <person name="Ueda H.R."/>
            <person name="van Nimwegen E."/>
            <person name="Verardo R."/>
            <person name="Wei C.L."/>
            <person name="Yagi K."/>
            <person name="Yamanishi H."/>
            <person name="Zabarovsky E."/>
            <person name="Zhu S."/>
            <person name="Zimmer A."/>
            <person name="Hide W."/>
            <person name="Bult C."/>
            <person name="Grimmond S.M."/>
            <person name="Teasdale R.D."/>
            <person name="Liu E.T."/>
            <person name="Brusic V."/>
            <person name="Quackenbush J."/>
            <person name="Wahlestedt C."/>
            <person name="Mattick J.S."/>
            <person name="Hume D.A."/>
            <person name="Kai C."/>
            <person name="Sasaki D."/>
            <person name="Tomaru Y."/>
            <person name="Fukuda S."/>
            <person name="Kanamori-Katayama M."/>
            <person name="Suzuki M."/>
            <person name="Aoki J."/>
            <person name="Arakawa T."/>
            <person name="Iida J."/>
            <person name="Imamura K."/>
            <person name="Itoh M."/>
            <person name="Kato T."/>
            <person name="Kawaji H."/>
            <person name="Kawagashira N."/>
            <person name="Kawashima T."/>
            <person name="Kojima M."/>
            <person name="Kondo S."/>
            <person name="Konno H."/>
            <person name="Nakano K."/>
            <person name="Ninomiya N."/>
            <person name="Nishio T."/>
            <person name="Okada M."/>
            <person name="Plessy C."/>
            <person name="Shibata K."/>
            <person name="Shiraki T."/>
            <person name="Suzuki S."/>
            <person name="Tagami M."/>
            <person name="Waki K."/>
            <person name="Watahiki A."/>
            <person name="Okamura-Oho Y."/>
            <person name="Suzuki H."/>
            <person name="Kawai J."/>
            <person name="Hayashizaki Y."/>
        </authorList>
    </citation>
    <scope>NUCLEOTIDE SEQUENCE [LARGE SCALE MRNA] (ISOFORM 2)</scope>
    <source>
        <strain>C57BL/6J</strain>
        <tissue>Lung</tissue>
    </source>
</reference>
<reference key="4">
    <citation type="submission" date="2005-07" db="EMBL/GenBank/DDBJ databases">
        <authorList>
            <person name="Mural R.J."/>
            <person name="Adams M.D."/>
            <person name="Myers E.W."/>
            <person name="Smith H.O."/>
            <person name="Venter J.C."/>
        </authorList>
    </citation>
    <scope>NUCLEOTIDE SEQUENCE [LARGE SCALE GENOMIC DNA]</scope>
</reference>
<reference key="5">
    <citation type="journal article" date="2004" name="Genome Res.">
        <title>The status, quality, and expansion of the NIH full-length cDNA project: the Mammalian Gene Collection (MGC).</title>
        <authorList>
            <consortium name="The MGC Project Team"/>
        </authorList>
    </citation>
    <scope>NUCLEOTIDE SEQUENCE [LARGE SCALE MRNA] (ISOFORM 1)</scope>
    <source>
        <strain>C57BL/6J</strain>
        <tissue>Eye</tissue>
    </source>
</reference>
<reference key="6">
    <citation type="journal article" date="1998" name="EMBO J.">
        <title>Xiro3 encodes a Xenopus homolog of the Drosophila Iroquois genes and functions in neural specification.</title>
        <authorList>
            <person name="Bellefroid E.J."/>
            <person name="Kobbe A."/>
            <person name="Gruss P."/>
            <person name="Pieler T."/>
            <person name="Gurdon J.B."/>
            <person name="Papalopulu N."/>
        </authorList>
    </citation>
    <scope>DEVELOPMENTAL STAGE</scope>
</reference>
<reference key="7">
    <citation type="journal article" date="2000" name="Cell">
        <title>A homeodomain protein code specifies progenitor cell identity and neuronal fate in the ventral neural tube.</title>
        <authorList>
            <person name="Briscoe J."/>
            <person name="Pierani A."/>
            <person name="Jessell T.M."/>
            <person name="Ericson J."/>
        </authorList>
    </citation>
    <scope>FUNCTION</scope>
    <scope>TISSUE SPECIFICITY</scope>
</reference>
<reference key="8">
    <citation type="journal article" date="2000" name="Mech. Dev.">
        <title>Expression of two novel mouse Iroquois-class homeobox genes during neurogenesis.</title>
        <authorList>
            <person name="Cohen D.R."/>
            <person name="Cheng C.W."/>
            <person name="Cheng S.H."/>
            <person name="Hui C.-C."/>
        </authorList>
    </citation>
    <scope>DEVELOPMENTAL STAGE</scope>
</reference>
<reference key="9">
    <citation type="journal article" date="2004" name="Development">
        <title>Analysis of embryonic motoneuron gene regulation: derepression of general activators function in concert with enhancer factors.</title>
        <authorList>
            <person name="Lee S.K."/>
            <person name="Jurata L.W."/>
            <person name="Funahashi J."/>
            <person name="Ruiz E.C."/>
            <person name="Pfaff S.L."/>
        </authorList>
    </citation>
    <scope>FUNCTION AS TRANSCRIPTIONAL REPRESSOR</scope>
</reference>
<reference key="10">
    <citation type="journal article" date="2007" name="Genes Dev.">
        <title>The prepattern transcription factor Irx3 directs nephron segment identity.</title>
        <authorList>
            <person name="Reggiani L."/>
            <person name="Raciti D."/>
            <person name="Airik R."/>
            <person name="Kispert A."/>
            <person name="Braendli A.W."/>
        </authorList>
    </citation>
    <scope>TISSUE SPECIFICITY</scope>
</reference>
<reference key="11">
    <citation type="journal article" date="2010" name="Cell">
        <title>A tissue-specific atlas of mouse protein phosphorylation and expression.</title>
        <authorList>
            <person name="Huttlin E.L."/>
            <person name="Jedrychowski M.P."/>
            <person name="Elias J.E."/>
            <person name="Goswami T."/>
            <person name="Rad R."/>
            <person name="Beausoleil S.A."/>
            <person name="Villen J."/>
            <person name="Haas W."/>
            <person name="Sowa M.E."/>
            <person name="Gygi S.P."/>
        </authorList>
    </citation>
    <scope>PHOSPHORYLATION [LARGE SCALE ANALYSIS] AT SER-326 AND SER-329</scope>
    <scope>IDENTIFICATION BY MASS SPECTROMETRY [LARGE SCALE ANALYSIS]</scope>
    <source>
        <tissue>Kidney</tissue>
        <tissue>Lung</tissue>
    </source>
</reference>
<reference key="12">
    <citation type="journal article" date="2014" name="Nature">
        <title>Obesity-associated variants within FTO form long-range functional connections with IRX3.</title>
        <authorList>
            <person name="Smemo S."/>
            <person name="Tena J.J."/>
            <person name="Kim K.H."/>
            <person name="Gamazon E.R."/>
            <person name="Sakabe N.J."/>
            <person name="Gomez-Marin C."/>
            <person name="Aneas I."/>
            <person name="Credidio F.L."/>
            <person name="Sobreira D.R."/>
            <person name="Wasserman N.F."/>
            <person name="Lee J.H."/>
            <person name="Puviindran V."/>
            <person name="Tam D."/>
            <person name="Shen M."/>
            <person name="Son J.E."/>
            <person name="Vakili N.A."/>
            <person name="Sung H.K."/>
            <person name="Naranjo S."/>
            <person name="Acemel R.D."/>
            <person name="Manzanares M."/>
            <person name="Nagy A."/>
            <person name="Cox N.J."/>
            <person name="Hui C.C."/>
            <person name="Gomez-Skarmeta J.L."/>
            <person name="Nobrega M.A."/>
        </authorList>
    </citation>
    <scope>FUNCTION</scope>
    <scope>DISRUPTION PHENOTYPE</scope>
</reference>